<organism>
    <name type="scientific">Lactococcus lactis subsp. cremoris</name>
    <name type="common">Streptococcus cremoris</name>
    <dbReference type="NCBI Taxonomy" id="1359"/>
    <lineage>
        <taxon>Bacteria</taxon>
        <taxon>Bacillati</taxon>
        <taxon>Bacillota</taxon>
        <taxon>Bacilli</taxon>
        <taxon>Lactobacillales</taxon>
        <taxon>Streptococcaceae</taxon>
        <taxon>Lactococcus</taxon>
    </lineage>
</organism>
<feature type="chain" id="PRO_0000147071" description="Phosphoenolpyruvate-protein phosphotransferase">
    <location>
        <begin position="1"/>
        <end position="575"/>
    </location>
</feature>
<feature type="active site" description="Tele-phosphohistidine intermediate" evidence="1">
    <location>
        <position position="191"/>
    </location>
</feature>
<feature type="active site" description="Proton donor" evidence="1">
    <location>
        <position position="506"/>
    </location>
</feature>
<feature type="binding site" evidence="2">
    <location>
        <position position="298"/>
    </location>
    <ligand>
        <name>phosphoenolpyruvate</name>
        <dbReference type="ChEBI" id="CHEBI:58702"/>
    </ligand>
</feature>
<feature type="binding site" evidence="1">
    <location>
        <position position="334"/>
    </location>
    <ligand>
        <name>phosphoenolpyruvate</name>
        <dbReference type="ChEBI" id="CHEBI:58702"/>
    </ligand>
</feature>
<feature type="binding site" evidence="1">
    <location>
        <position position="435"/>
    </location>
    <ligand>
        <name>Mg(2+)</name>
        <dbReference type="ChEBI" id="CHEBI:18420"/>
    </ligand>
</feature>
<feature type="binding site" evidence="1">
    <location>
        <begin position="458"/>
        <end position="459"/>
    </location>
    <ligand>
        <name>phosphoenolpyruvate</name>
        <dbReference type="ChEBI" id="CHEBI:58702"/>
    </ligand>
</feature>
<feature type="binding site" evidence="1">
    <location>
        <position position="459"/>
    </location>
    <ligand>
        <name>Mg(2+)</name>
        <dbReference type="ChEBI" id="CHEBI:18420"/>
    </ligand>
</feature>
<feature type="binding site" evidence="2">
    <location>
        <position position="469"/>
    </location>
    <ligand>
        <name>phosphoenolpyruvate</name>
        <dbReference type="ChEBI" id="CHEBI:58702"/>
    </ligand>
</feature>
<accession>Q9ZAD8</accession>
<gene>
    <name type="primary">ptsI</name>
</gene>
<protein>
    <recommendedName>
        <fullName evidence="4">Phosphoenolpyruvate-protein phosphotransferase</fullName>
        <ecNumber evidence="1">2.7.3.9</ecNumber>
    </recommendedName>
    <alternativeName>
        <fullName evidence="4">Phosphotransferase system, enzyme I</fullName>
    </alternativeName>
</protein>
<reference key="1">
    <citation type="journal article" date="1999" name="J. Bacteriol.">
        <title>Molecular characterization of the Lactococcus lactis ptsHI operon and analysis of the regulatory role of HPr.</title>
        <authorList>
            <person name="Luesink E.J."/>
            <person name="Beumer C.M.A."/>
            <person name="Kuipers O.P."/>
            <person name="de Vos W.M."/>
        </authorList>
    </citation>
    <scope>NUCLEOTIDE SEQUENCE [GENOMIC DNA]</scope>
    <scope>FUNCTION</scope>
    <scope>DISRUPTION PHENOTYPE</scope>
    <scope>INDUCTION</scope>
</reference>
<comment type="function">
    <text evidence="1 3">General (non sugar-specific) component of the phosphoenolpyruvate-dependent sugar phosphotransferase system (sugar PTS). This major carbohydrate active-transport system catalyzes the phosphorylation of incoming sugar substrates concomitantly with their translocation across the cell membrane. Enzyme I transfers the phosphoryl group from phosphoenolpyruvate (PEP) to the phosphoryl carrier protein (HPr).</text>
</comment>
<comment type="catalytic activity">
    <reaction evidence="1">
        <text>L-histidyl-[protein] + phosphoenolpyruvate = N(pros)-phospho-L-histidyl-[protein] + pyruvate</text>
        <dbReference type="Rhea" id="RHEA:23880"/>
        <dbReference type="Rhea" id="RHEA-COMP:9745"/>
        <dbReference type="Rhea" id="RHEA-COMP:9746"/>
        <dbReference type="ChEBI" id="CHEBI:15361"/>
        <dbReference type="ChEBI" id="CHEBI:29979"/>
        <dbReference type="ChEBI" id="CHEBI:58702"/>
        <dbReference type="ChEBI" id="CHEBI:64837"/>
        <dbReference type="EC" id="2.7.3.9"/>
    </reaction>
</comment>
<comment type="cofactor">
    <cofactor evidence="1">
        <name>Mg(2+)</name>
        <dbReference type="ChEBI" id="CHEBI:18420"/>
    </cofactor>
</comment>
<comment type="subunit">
    <text evidence="1">Homodimer.</text>
</comment>
<comment type="subcellular location">
    <subcellularLocation>
        <location evidence="5">Cytoplasm</location>
    </subcellularLocation>
</comment>
<comment type="induction">
    <text evidence="3">By response to the carbon source.</text>
</comment>
<comment type="domain">
    <text evidence="1">The N-terminal domain contains the HPr binding site, the central domain the pyrophosphate/phosphate carrier histidine, and the C-terminal domain the pyruvate binding site.</text>
</comment>
<comment type="disruption phenotype">
    <text evidence="3">Cells lacking this gene are unable to grow on sucrose and fructose. Severe reduction of the growth rate on glucose, galactose and maltose are observed.</text>
</comment>
<comment type="miscellaneous">
    <text evidence="1">The reaction takes place in three steps, mediated by a phosphocarrier histidine residue located on the surface of the central domain. The two first partial reactions are catalyzed at an active site located on the N-terminal domain, and the third partial reaction is catalyzed at an active site located on the C-terminal domain. For catalytic turnover, the central domain swivels from the concave surface of the N-terminal domain to that of the C-terminal domain.</text>
</comment>
<comment type="similarity">
    <text evidence="5">Belongs to the PEP-utilizing enzyme family.</text>
</comment>
<name>PT1_LACLC</name>
<dbReference type="EC" id="2.7.3.9" evidence="1"/>
<dbReference type="EMBL" id="Z97203">
    <property type="protein sequence ID" value="CAB10077.1"/>
    <property type="molecule type" value="Genomic_DNA"/>
</dbReference>
<dbReference type="SMR" id="Q9ZAD8"/>
<dbReference type="OMA" id="RMFANDH"/>
<dbReference type="GO" id="GO:0005737">
    <property type="term" value="C:cytoplasm"/>
    <property type="evidence" value="ECO:0007669"/>
    <property type="project" value="UniProtKB-SubCell"/>
</dbReference>
<dbReference type="GO" id="GO:0016301">
    <property type="term" value="F:kinase activity"/>
    <property type="evidence" value="ECO:0007669"/>
    <property type="project" value="UniProtKB-KW"/>
</dbReference>
<dbReference type="GO" id="GO:0046872">
    <property type="term" value="F:metal ion binding"/>
    <property type="evidence" value="ECO:0007669"/>
    <property type="project" value="UniProtKB-KW"/>
</dbReference>
<dbReference type="GO" id="GO:0008965">
    <property type="term" value="F:phosphoenolpyruvate-protein phosphotransferase activity"/>
    <property type="evidence" value="ECO:0007669"/>
    <property type="project" value="UniProtKB-EC"/>
</dbReference>
<dbReference type="GO" id="GO:0009401">
    <property type="term" value="P:phosphoenolpyruvate-dependent sugar phosphotransferase system"/>
    <property type="evidence" value="ECO:0007669"/>
    <property type="project" value="UniProtKB-KW"/>
</dbReference>
<dbReference type="FunFam" id="1.10.274.10:FF:000001">
    <property type="entry name" value="Phosphoenolpyruvate-protein phosphotransferase"/>
    <property type="match status" value="1"/>
</dbReference>
<dbReference type="FunFam" id="3.20.20.60:FF:000007">
    <property type="entry name" value="Phosphoenolpyruvate-protein phosphotransferase"/>
    <property type="match status" value="1"/>
</dbReference>
<dbReference type="Gene3D" id="3.20.20.60">
    <property type="entry name" value="Phosphoenolpyruvate-binding domains"/>
    <property type="match status" value="1"/>
</dbReference>
<dbReference type="Gene3D" id="3.50.30.10">
    <property type="entry name" value="Phosphohistidine domain"/>
    <property type="match status" value="1"/>
</dbReference>
<dbReference type="Gene3D" id="1.10.274.10">
    <property type="entry name" value="PtsI, HPr-binding domain"/>
    <property type="match status" value="1"/>
</dbReference>
<dbReference type="InterPro" id="IPR008279">
    <property type="entry name" value="PEP-util_enz_mobile_dom"/>
</dbReference>
<dbReference type="InterPro" id="IPR050499">
    <property type="entry name" value="PEP-utilizing_PTS_enzyme"/>
</dbReference>
<dbReference type="InterPro" id="IPR018274">
    <property type="entry name" value="PEP_util_AS"/>
</dbReference>
<dbReference type="InterPro" id="IPR000121">
    <property type="entry name" value="PEP_util_C"/>
</dbReference>
<dbReference type="InterPro" id="IPR023151">
    <property type="entry name" value="PEP_util_CS"/>
</dbReference>
<dbReference type="InterPro" id="IPR036637">
    <property type="entry name" value="Phosphohistidine_dom_sf"/>
</dbReference>
<dbReference type="InterPro" id="IPR024692">
    <property type="entry name" value="PTS_EI"/>
</dbReference>
<dbReference type="InterPro" id="IPR006318">
    <property type="entry name" value="PTS_EI-like"/>
</dbReference>
<dbReference type="InterPro" id="IPR008731">
    <property type="entry name" value="PTS_EIN"/>
</dbReference>
<dbReference type="InterPro" id="IPR036618">
    <property type="entry name" value="PtsI_HPr-bd_sf"/>
</dbReference>
<dbReference type="InterPro" id="IPR015813">
    <property type="entry name" value="Pyrv/PenolPyrv_kinase-like_dom"/>
</dbReference>
<dbReference type="InterPro" id="IPR040442">
    <property type="entry name" value="Pyrv_kinase-like_dom_sf"/>
</dbReference>
<dbReference type="NCBIfam" id="TIGR01417">
    <property type="entry name" value="PTS_I_fam"/>
    <property type="match status" value="1"/>
</dbReference>
<dbReference type="PANTHER" id="PTHR46244">
    <property type="entry name" value="PHOSPHOENOLPYRUVATE-PROTEIN PHOSPHOTRANSFERASE"/>
    <property type="match status" value="1"/>
</dbReference>
<dbReference type="PANTHER" id="PTHR46244:SF3">
    <property type="entry name" value="PHOSPHOENOLPYRUVATE-PROTEIN PHOSPHOTRANSFERASE"/>
    <property type="match status" value="1"/>
</dbReference>
<dbReference type="Pfam" id="PF05524">
    <property type="entry name" value="PEP-utilisers_N"/>
    <property type="match status" value="1"/>
</dbReference>
<dbReference type="Pfam" id="PF00391">
    <property type="entry name" value="PEP-utilizers"/>
    <property type="match status" value="1"/>
</dbReference>
<dbReference type="Pfam" id="PF02896">
    <property type="entry name" value="PEP-utilizers_C"/>
    <property type="match status" value="1"/>
</dbReference>
<dbReference type="PIRSF" id="PIRSF000732">
    <property type="entry name" value="PTS_enzyme_I"/>
    <property type="match status" value="1"/>
</dbReference>
<dbReference type="PRINTS" id="PR01736">
    <property type="entry name" value="PHPHTRNFRASE"/>
</dbReference>
<dbReference type="SUPFAM" id="SSF47831">
    <property type="entry name" value="Enzyme I of the PEP:sugar phosphotransferase system HPr-binding (sub)domain"/>
    <property type="match status" value="1"/>
</dbReference>
<dbReference type="SUPFAM" id="SSF51621">
    <property type="entry name" value="Phosphoenolpyruvate/pyruvate domain"/>
    <property type="match status" value="1"/>
</dbReference>
<dbReference type="SUPFAM" id="SSF52009">
    <property type="entry name" value="Phosphohistidine domain"/>
    <property type="match status" value="1"/>
</dbReference>
<dbReference type="PROSITE" id="PS00742">
    <property type="entry name" value="PEP_ENZYMES_2"/>
    <property type="match status" value="1"/>
</dbReference>
<dbReference type="PROSITE" id="PS00370">
    <property type="entry name" value="PEP_ENZYMES_PHOS_SITE"/>
    <property type="match status" value="1"/>
</dbReference>
<proteinExistence type="evidence at transcript level"/>
<sequence length="575" mass="62577">MTTMLKGIAASSGVAVAKAYLLVQPDLSFETKTIADTANEEARLDAALATSQSELQLIKDKAVTTLGEEAASVFDAHMMVLADPDMTAQIKAVINDKKVNAESALKEVTDMFIGIFEGMTDNAYMQERAADIKDVTKRVLAHLLGVKLPSPALIDEEVIIVAEDLTPSDTAQLDKKFVKAFVTNIGGRTSHSAIMARTLEIPAVLGTNNITELVSEGQLLAVSGLTGEVILDPSTEQQSEFHKAGDAYAAQKAEWAALKDAETVTADGRHYELAANIGTPKDVEGVNDNGAEAIGLYRTEFLYMDAQDFPTEDDQYEAYKAVLEGMNGKPVVVRTMDIGGDKTLPYFDLPKEMNPFLGWRALRISLSTAGDGMFRTQLRALLRASVHGQLRIMFPMVALVTEFRAAKKIYDEEKSKLIAEGVPVAEGIEVGIMIEIPAAAMLADQFAKEVDFFSIGTNDLIQYTMAADRMNEQVSYLYQPYNPSILRLINNVIKAAHAEGKWAGMCGEMAGDQTAVPLLMGMGLDEFSMSATSVLQTRSLMKRLDSKKMEELSSKALSECATMEEVIALVEEYTK</sequence>
<evidence type="ECO:0000250" key="1">
    <source>
        <dbReference type="UniProtKB" id="P08839"/>
    </source>
</evidence>
<evidence type="ECO:0000250" key="2">
    <source>
        <dbReference type="UniProtKB" id="P23533"/>
    </source>
</evidence>
<evidence type="ECO:0000269" key="3">
    <source>
    </source>
</evidence>
<evidence type="ECO:0000303" key="4">
    <source>
    </source>
</evidence>
<evidence type="ECO:0000305" key="5"/>
<keyword id="KW-0963">Cytoplasm</keyword>
<keyword id="KW-0418">Kinase</keyword>
<keyword id="KW-0460">Magnesium</keyword>
<keyword id="KW-0479">Metal-binding</keyword>
<keyword id="KW-0598">Phosphotransferase system</keyword>
<keyword id="KW-0762">Sugar transport</keyword>
<keyword id="KW-0808">Transferase</keyword>
<keyword id="KW-0813">Transport</keyword>